<keyword id="KW-0520">NAD</keyword>
<keyword id="KW-0560">Oxidoreductase</keyword>
<keyword id="KW-0816">Tricarboxylic acid cycle</keyword>
<feature type="chain" id="PRO_1000191646" description="Malate dehydrogenase">
    <location>
        <begin position="1"/>
        <end position="309"/>
    </location>
</feature>
<feature type="active site" description="Proton acceptor" evidence="1">
    <location>
        <position position="175"/>
    </location>
</feature>
<feature type="binding site" evidence="1">
    <location>
        <begin position="9"/>
        <end position="14"/>
    </location>
    <ligand>
        <name>NAD(+)</name>
        <dbReference type="ChEBI" id="CHEBI:57540"/>
    </ligand>
</feature>
<feature type="binding site" evidence="1">
    <location>
        <position position="33"/>
    </location>
    <ligand>
        <name>NAD(+)</name>
        <dbReference type="ChEBI" id="CHEBI:57540"/>
    </ligand>
</feature>
<feature type="binding site" evidence="1">
    <location>
        <position position="82"/>
    </location>
    <ligand>
        <name>substrate</name>
    </ligand>
</feature>
<feature type="binding site" evidence="1">
    <location>
        <position position="88"/>
    </location>
    <ligand>
        <name>substrate</name>
    </ligand>
</feature>
<feature type="binding site" evidence="1">
    <location>
        <position position="95"/>
    </location>
    <ligand>
        <name>NAD(+)</name>
        <dbReference type="ChEBI" id="CHEBI:57540"/>
    </ligand>
</feature>
<feature type="binding site" evidence="1">
    <location>
        <begin position="118"/>
        <end position="120"/>
    </location>
    <ligand>
        <name>NAD(+)</name>
        <dbReference type="ChEBI" id="CHEBI:57540"/>
    </ligand>
</feature>
<feature type="binding site" evidence="1">
    <location>
        <position position="120"/>
    </location>
    <ligand>
        <name>substrate</name>
    </ligand>
</feature>
<feature type="binding site" evidence="1">
    <location>
        <position position="151"/>
    </location>
    <ligand>
        <name>substrate</name>
    </ligand>
</feature>
<organism>
    <name type="scientific">Chloroflexus aggregans (strain MD-66 / DSM 9485)</name>
    <dbReference type="NCBI Taxonomy" id="326427"/>
    <lineage>
        <taxon>Bacteria</taxon>
        <taxon>Bacillati</taxon>
        <taxon>Chloroflexota</taxon>
        <taxon>Chloroflexia</taxon>
        <taxon>Chloroflexales</taxon>
        <taxon>Chloroflexineae</taxon>
        <taxon>Chloroflexaceae</taxon>
        <taxon>Chloroflexus</taxon>
    </lineage>
</organism>
<reference key="1">
    <citation type="submission" date="2008-12" db="EMBL/GenBank/DDBJ databases">
        <title>Complete sequence of Chloroflexus aggregans DSM 9485.</title>
        <authorList>
            <consortium name="US DOE Joint Genome Institute"/>
            <person name="Lucas S."/>
            <person name="Copeland A."/>
            <person name="Lapidus A."/>
            <person name="Glavina del Rio T."/>
            <person name="Dalin E."/>
            <person name="Tice H."/>
            <person name="Pitluck S."/>
            <person name="Foster B."/>
            <person name="Larimer F."/>
            <person name="Land M."/>
            <person name="Hauser L."/>
            <person name="Kyrpides N."/>
            <person name="Mikhailova N."/>
            <person name="Bryant D.A."/>
            <person name="Richardson P."/>
        </authorList>
    </citation>
    <scope>NUCLEOTIDE SEQUENCE [LARGE SCALE GENOMIC DNA]</scope>
    <source>
        <strain>MD-66 / DSM 9485</strain>
    </source>
</reference>
<evidence type="ECO:0000255" key="1">
    <source>
        <dbReference type="HAMAP-Rule" id="MF_00487"/>
    </source>
</evidence>
<comment type="function">
    <text evidence="1">Catalyzes the reversible oxidation of malate to oxaloacetate.</text>
</comment>
<comment type="catalytic activity">
    <reaction evidence="1">
        <text>(S)-malate + NAD(+) = oxaloacetate + NADH + H(+)</text>
        <dbReference type="Rhea" id="RHEA:21432"/>
        <dbReference type="ChEBI" id="CHEBI:15378"/>
        <dbReference type="ChEBI" id="CHEBI:15589"/>
        <dbReference type="ChEBI" id="CHEBI:16452"/>
        <dbReference type="ChEBI" id="CHEBI:57540"/>
        <dbReference type="ChEBI" id="CHEBI:57945"/>
        <dbReference type="EC" id="1.1.1.37"/>
    </reaction>
</comment>
<comment type="similarity">
    <text evidence="1">Belongs to the LDH/MDH superfamily. MDH type 3 family.</text>
</comment>
<sequence>MRKKISIIGAGFVGSTTAHWLAAKELGDIVLLDIVEGIPQGKALDLYEASPIEDFDVRVIGTNDYADTANSDVIVVTSGAPRKPGMSREDLIKVNADITRDCISKAAPLSPNAVIIMVNNPLDAMTYLAAEVSGFPKERVMGQAGVLDAARYRTFIAMEAGVSVEDVQAMLMGGHGDEMVPLPRFSTISGIPVSHFIAPDRLAQIIERTRKGGGEIVNLLKTGSAYYAPAAATAQMVEAVLKDKKRVVPVAAYLTGQYGLHDMYFGVPVVLGAGGVEKIIELPLNEEEMALLNASAKAVRATLDTLKSL</sequence>
<proteinExistence type="inferred from homology"/>
<accession>B8GDA2</accession>
<gene>
    <name evidence="1" type="primary">mdh</name>
    <name type="ordered locus">Cagg_2290</name>
</gene>
<name>MDH_CHLAD</name>
<dbReference type="EC" id="1.1.1.37" evidence="1"/>
<dbReference type="EMBL" id="CP001337">
    <property type="protein sequence ID" value="ACL25169.1"/>
    <property type="molecule type" value="Genomic_DNA"/>
</dbReference>
<dbReference type="RefSeq" id="WP_015941027.1">
    <property type="nucleotide sequence ID" value="NC_011831.1"/>
</dbReference>
<dbReference type="SMR" id="B8GDA2"/>
<dbReference type="STRING" id="326427.Cagg_2290"/>
<dbReference type="KEGG" id="cag:Cagg_2290"/>
<dbReference type="eggNOG" id="COG0039">
    <property type="taxonomic scope" value="Bacteria"/>
</dbReference>
<dbReference type="HOGENOM" id="CLU_045401_2_1_0"/>
<dbReference type="OrthoDB" id="9802969at2"/>
<dbReference type="Proteomes" id="UP000002508">
    <property type="component" value="Chromosome"/>
</dbReference>
<dbReference type="GO" id="GO:0004459">
    <property type="term" value="F:L-lactate dehydrogenase activity"/>
    <property type="evidence" value="ECO:0007669"/>
    <property type="project" value="TreeGrafter"/>
</dbReference>
<dbReference type="GO" id="GO:0030060">
    <property type="term" value="F:L-malate dehydrogenase (NAD+) activity"/>
    <property type="evidence" value="ECO:0007669"/>
    <property type="project" value="UniProtKB-UniRule"/>
</dbReference>
<dbReference type="GO" id="GO:0006089">
    <property type="term" value="P:lactate metabolic process"/>
    <property type="evidence" value="ECO:0007669"/>
    <property type="project" value="TreeGrafter"/>
</dbReference>
<dbReference type="GO" id="GO:0006099">
    <property type="term" value="P:tricarboxylic acid cycle"/>
    <property type="evidence" value="ECO:0007669"/>
    <property type="project" value="UniProtKB-UniRule"/>
</dbReference>
<dbReference type="CDD" id="cd01339">
    <property type="entry name" value="LDH-like_MDH"/>
    <property type="match status" value="1"/>
</dbReference>
<dbReference type="FunFam" id="3.40.50.720:FF:000018">
    <property type="entry name" value="Malate dehydrogenase"/>
    <property type="match status" value="1"/>
</dbReference>
<dbReference type="FunFam" id="3.90.110.10:FF:000004">
    <property type="entry name" value="Malate dehydrogenase"/>
    <property type="match status" value="1"/>
</dbReference>
<dbReference type="Gene3D" id="3.90.110.10">
    <property type="entry name" value="Lactate dehydrogenase/glycoside hydrolase, family 4, C-terminal"/>
    <property type="match status" value="1"/>
</dbReference>
<dbReference type="Gene3D" id="3.40.50.720">
    <property type="entry name" value="NAD(P)-binding Rossmann-like Domain"/>
    <property type="match status" value="1"/>
</dbReference>
<dbReference type="HAMAP" id="MF_00487">
    <property type="entry name" value="Malate_dehydrog_3"/>
    <property type="match status" value="1"/>
</dbReference>
<dbReference type="InterPro" id="IPR001557">
    <property type="entry name" value="L-lactate/malate_DH"/>
</dbReference>
<dbReference type="InterPro" id="IPR022383">
    <property type="entry name" value="Lactate/malate_DH_C"/>
</dbReference>
<dbReference type="InterPro" id="IPR001236">
    <property type="entry name" value="Lactate/malate_DH_N"/>
</dbReference>
<dbReference type="InterPro" id="IPR015955">
    <property type="entry name" value="Lactate_DH/Glyco_Ohase_4_C"/>
</dbReference>
<dbReference type="InterPro" id="IPR011275">
    <property type="entry name" value="Malate_DH_type3"/>
</dbReference>
<dbReference type="InterPro" id="IPR036291">
    <property type="entry name" value="NAD(P)-bd_dom_sf"/>
</dbReference>
<dbReference type="NCBIfam" id="TIGR01763">
    <property type="entry name" value="MalateDH_bact"/>
    <property type="match status" value="1"/>
</dbReference>
<dbReference type="NCBIfam" id="NF004863">
    <property type="entry name" value="PRK06223.1"/>
    <property type="match status" value="1"/>
</dbReference>
<dbReference type="PANTHER" id="PTHR43128">
    <property type="entry name" value="L-2-HYDROXYCARBOXYLATE DEHYDROGENASE (NAD(P)(+))"/>
    <property type="match status" value="1"/>
</dbReference>
<dbReference type="PANTHER" id="PTHR43128:SF16">
    <property type="entry name" value="L-LACTATE DEHYDROGENASE"/>
    <property type="match status" value="1"/>
</dbReference>
<dbReference type="Pfam" id="PF02866">
    <property type="entry name" value="Ldh_1_C"/>
    <property type="match status" value="1"/>
</dbReference>
<dbReference type="Pfam" id="PF00056">
    <property type="entry name" value="Ldh_1_N"/>
    <property type="match status" value="1"/>
</dbReference>
<dbReference type="PIRSF" id="PIRSF000102">
    <property type="entry name" value="Lac_mal_DH"/>
    <property type="match status" value="1"/>
</dbReference>
<dbReference type="PRINTS" id="PR00086">
    <property type="entry name" value="LLDHDRGNASE"/>
</dbReference>
<dbReference type="SUPFAM" id="SSF56327">
    <property type="entry name" value="LDH C-terminal domain-like"/>
    <property type="match status" value="1"/>
</dbReference>
<dbReference type="SUPFAM" id="SSF51735">
    <property type="entry name" value="NAD(P)-binding Rossmann-fold domains"/>
    <property type="match status" value="1"/>
</dbReference>
<protein>
    <recommendedName>
        <fullName evidence="1">Malate dehydrogenase</fullName>
        <ecNumber evidence="1">1.1.1.37</ecNumber>
    </recommendedName>
</protein>